<evidence type="ECO:0000250" key="1"/>
<evidence type="ECO:0000255" key="2"/>
<evidence type="ECO:0000305" key="3"/>
<gene>
    <name type="primary">BLE3</name>
    <name type="ORF">OsI_19146</name>
</gene>
<reference key="1">
    <citation type="journal article" date="2005" name="PLoS Biol.">
        <title>The genomes of Oryza sativa: a history of duplications.</title>
        <authorList>
            <person name="Yu J."/>
            <person name="Wang J."/>
            <person name="Lin W."/>
            <person name="Li S."/>
            <person name="Li H."/>
            <person name="Zhou J."/>
            <person name="Ni P."/>
            <person name="Dong W."/>
            <person name="Hu S."/>
            <person name="Zeng C."/>
            <person name="Zhang J."/>
            <person name="Zhang Y."/>
            <person name="Li R."/>
            <person name="Xu Z."/>
            <person name="Li S."/>
            <person name="Li X."/>
            <person name="Zheng H."/>
            <person name="Cong L."/>
            <person name="Lin L."/>
            <person name="Yin J."/>
            <person name="Geng J."/>
            <person name="Li G."/>
            <person name="Shi J."/>
            <person name="Liu J."/>
            <person name="Lv H."/>
            <person name="Li J."/>
            <person name="Wang J."/>
            <person name="Deng Y."/>
            <person name="Ran L."/>
            <person name="Shi X."/>
            <person name="Wang X."/>
            <person name="Wu Q."/>
            <person name="Li C."/>
            <person name="Ren X."/>
            <person name="Wang J."/>
            <person name="Wang X."/>
            <person name="Li D."/>
            <person name="Liu D."/>
            <person name="Zhang X."/>
            <person name="Ji Z."/>
            <person name="Zhao W."/>
            <person name="Sun Y."/>
            <person name="Zhang Z."/>
            <person name="Bao J."/>
            <person name="Han Y."/>
            <person name="Dong L."/>
            <person name="Ji J."/>
            <person name="Chen P."/>
            <person name="Wu S."/>
            <person name="Liu J."/>
            <person name="Xiao Y."/>
            <person name="Bu D."/>
            <person name="Tan J."/>
            <person name="Yang L."/>
            <person name="Ye C."/>
            <person name="Zhang J."/>
            <person name="Xu J."/>
            <person name="Zhou Y."/>
            <person name="Yu Y."/>
            <person name="Zhang B."/>
            <person name="Zhuang S."/>
            <person name="Wei H."/>
            <person name="Liu B."/>
            <person name="Lei M."/>
            <person name="Yu H."/>
            <person name="Li Y."/>
            <person name="Xu H."/>
            <person name="Wei S."/>
            <person name="He X."/>
            <person name="Fang L."/>
            <person name="Zhang Z."/>
            <person name="Zhang Y."/>
            <person name="Huang X."/>
            <person name="Su Z."/>
            <person name="Tong W."/>
            <person name="Li J."/>
            <person name="Tong Z."/>
            <person name="Li S."/>
            <person name="Ye J."/>
            <person name="Wang L."/>
            <person name="Fang L."/>
            <person name="Lei T."/>
            <person name="Chen C.-S."/>
            <person name="Chen H.-C."/>
            <person name="Xu Z."/>
            <person name="Li H."/>
            <person name="Huang H."/>
            <person name="Zhang F."/>
            <person name="Xu H."/>
            <person name="Li N."/>
            <person name="Zhao C."/>
            <person name="Li S."/>
            <person name="Dong L."/>
            <person name="Huang Y."/>
            <person name="Li L."/>
            <person name="Xi Y."/>
            <person name="Qi Q."/>
            <person name="Li W."/>
            <person name="Zhang B."/>
            <person name="Hu W."/>
            <person name="Zhang Y."/>
            <person name="Tian X."/>
            <person name="Jiao Y."/>
            <person name="Liang X."/>
            <person name="Jin J."/>
            <person name="Gao L."/>
            <person name="Zheng W."/>
            <person name="Hao B."/>
            <person name="Liu S.-M."/>
            <person name="Wang W."/>
            <person name="Yuan L."/>
            <person name="Cao M."/>
            <person name="McDermott J."/>
            <person name="Samudrala R."/>
            <person name="Wang J."/>
            <person name="Wong G.K.-S."/>
            <person name="Yang H."/>
        </authorList>
    </citation>
    <scope>NUCLEOTIDE SEQUENCE [LARGE SCALE GENOMIC DNA]</scope>
    <source>
        <strain>cv. 93-11</strain>
    </source>
</reference>
<reference key="2">
    <citation type="journal article" date="2007" name="Plant Mol. Biol.">
        <title>A collection of 10,096 indica rice full-length cDNAs reveals highly expressed sequence divergence between Oryza sativa indica and japonica subspecies.</title>
        <authorList>
            <person name="Liu X."/>
            <person name="Lu T."/>
            <person name="Yu S."/>
            <person name="Li Y."/>
            <person name="Huang Y."/>
            <person name="Huang T."/>
            <person name="Zhang L."/>
            <person name="Zhu J."/>
            <person name="Zhao Q."/>
            <person name="Fan D."/>
            <person name="Mu J."/>
            <person name="Shangguan Y."/>
            <person name="Feng Q."/>
            <person name="Guan J."/>
            <person name="Ying K."/>
            <person name="Zhang Y."/>
            <person name="Lin Z."/>
            <person name="Sun Z."/>
            <person name="Qian Q."/>
            <person name="Lu Y."/>
            <person name="Han B."/>
        </authorList>
    </citation>
    <scope>NUCLEOTIDE SEQUENCE [LARGE SCALE MRNA]</scope>
    <source>
        <strain>cv. Guang-Lu-Ai No.4</strain>
    </source>
</reference>
<reference key="3">
    <citation type="journal article" date="2014" name="Plant Physiol.">
        <title>Functional and evolutionary analysis of the CASPARIAN STRIP MEMBRANE DOMAIN PROTEIN family.</title>
        <authorList>
            <person name="Roppolo D."/>
            <person name="Boeckmann B."/>
            <person name="Pfister A."/>
            <person name="Boutet E."/>
            <person name="Rubio M.C."/>
            <person name="Denervaud-Tendon V."/>
            <person name="Vermeer J.E."/>
            <person name="Gheyselinck J."/>
            <person name="Xenarios I."/>
            <person name="Geldner N."/>
        </authorList>
    </citation>
    <scope>GENE FAMILY</scope>
    <scope>NOMENCLATURE</scope>
</reference>
<sequence>MAKVHRLMNAVLRLAAAAAAATAAVVMVTSRETTSFFGIQMEAKYSYTPSFIFFVVAYAVAAAYSLLVLAVPAGSALSRLALTTDVVLGMVLAGAVASAGAISDIAKNGNSHAGWLPVCGQIHAYCNHVMAALIAGFVALAVHFVVVMYSLHIVTDVICPCH</sequence>
<accession>A2Y2B7</accession>
<keyword id="KW-1003">Cell membrane</keyword>
<keyword id="KW-0217">Developmental protein</keyword>
<keyword id="KW-0472">Membrane</keyword>
<keyword id="KW-1185">Reference proteome</keyword>
<keyword id="KW-0812">Transmembrane</keyword>
<keyword id="KW-1133">Transmembrane helix</keyword>
<name>BLE3_ORYSI</name>
<feature type="chain" id="PRO_0000370284" description="CASP-like protein BLE3">
    <location>
        <begin position="1"/>
        <end position="162"/>
    </location>
</feature>
<feature type="topological domain" description="Cytoplasmic" evidence="2">
    <location>
        <begin position="1"/>
        <end position="7"/>
    </location>
</feature>
<feature type="transmembrane region" description="Helical" evidence="2">
    <location>
        <begin position="8"/>
        <end position="28"/>
    </location>
</feature>
<feature type="topological domain" description="Extracellular" evidence="2">
    <location>
        <begin position="29"/>
        <end position="50"/>
    </location>
</feature>
<feature type="transmembrane region" description="Helical" evidence="2">
    <location>
        <begin position="51"/>
        <end position="71"/>
    </location>
</feature>
<feature type="topological domain" description="Cytoplasmic" evidence="2">
    <location>
        <begin position="72"/>
        <end position="85"/>
    </location>
</feature>
<feature type="transmembrane region" description="Helical" evidence="2">
    <location>
        <begin position="86"/>
        <end position="106"/>
    </location>
</feature>
<feature type="topological domain" description="Extracellular" evidence="2">
    <location>
        <begin position="107"/>
        <end position="128"/>
    </location>
</feature>
<feature type="transmembrane region" description="Helical" evidence="2">
    <location>
        <begin position="129"/>
        <end position="149"/>
    </location>
</feature>
<feature type="topological domain" description="Cytoplasmic" evidence="2">
    <location>
        <begin position="150"/>
        <end position="162"/>
    </location>
</feature>
<feature type="sequence conflict" description="In Ref. 2; CT844375." evidence="3" ref="2">
    <original>A</original>
    <variation>G</variation>
    <location>
        <position position="139"/>
    </location>
</feature>
<comment type="function">
    <text evidence="1">Involved in cell elongation in rice through dual regulation by brassinolide and auxin.</text>
</comment>
<comment type="subunit">
    <text evidence="1">Homodimer and heterodimers.</text>
</comment>
<comment type="subcellular location">
    <subcellularLocation>
        <location evidence="1">Cell membrane</location>
        <topology evidence="1">Multi-pass membrane protein</topology>
    </subcellularLocation>
</comment>
<comment type="similarity">
    <text evidence="3">Belongs to the Casparian strip membrane proteins (CASP) family.</text>
</comment>
<proteinExistence type="evidence at transcript level"/>
<organism>
    <name type="scientific">Oryza sativa subsp. indica</name>
    <name type="common">Rice</name>
    <dbReference type="NCBI Taxonomy" id="39946"/>
    <lineage>
        <taxon>Eukaryota</taxon>
        <taxon>Viridiplantae</taxon>
        <taxon>Streptophyta</taxon>
        <taxon>Embryophyta</taxon>
        <taxon>Tracheophyta</taxon>
        <taxon>Spermatophyta</taxon>
        <taxon>Magnoliopsida</taxon>
        <taxon>Liliopsida</taxon>
        <taxon>Poales</taxon>
        <taxon>Poaceae</taxon>
        <taxon>BOP clade</taxon>
        <taxon>Oryzoideae</taxon>
        <taxon>Oryzeae</taxon>
        <taxon>Oryzinae</taxon>
        <taxon>Oryza</taxon>
        <taxon>Oryza sativa</taxon>
    </lineage>
</organism>
<protein>
    <recommendedName>
        <fullName>CASP-like protein BLE3</fullName>
    </recommendedName>
    <alternativeName>
        <fullName>CASP-like protein 1C2</fullName>
        <shortName>OsCASPL1C2</shortName>
    </alternativeName>
    <alternativeName>
        <fullName>Protein brassinolide-enhanced BLE3</fullName>
        <shortName>OsBLE3</shortName>
        <shortName>Protein BL-enhanced 3</shortName>
    </alternativeName>
</protein>
<dbReference type="EMBL" id="CM000130">
    <property type="protein sequence ID" value="EAY97227.1"/>
    <property type="molecule type" value="Genomic_DNA"/>
</dbReference>
<dbReference type="EMBL" id="CT844375">
    <property type="status" value="NOT_ANNOTATED_CDS"/>
    <property type="molecule type" value="mRNA"/>
</dbReference>
<dbReference type="SMR" id="A2Y2B7"/>
<dbReference type="STRING" id="39946.A2Y2B7"/>
<dbReference type="EnsemblPlants" id="BGIOSGA018445-TA">
    <property type="protein sequence ID" value="BGIOSGA018445-PA"/>
    <property type="gene ID" value="BGIOSGA018445"/>
</dbReference>
<dbReference type="EnsemblPlants" id="OsIR64_05g0008710.01">
    <property type="protein sequence ID" value="OsIR64_05g0008710.01"/>
    <property type="gene ID" value="OsIR64_05g0008710"/>
</dbReference>
<dbReference type="EnsemblPlants" id="OsLiXu_Ung0022690.01">
    <property type="protein sequence ID" value="OsLiXu_Ung0022690.01"/>
    <property type="gene ID" value="OsLiXu_Ung0022690"/>
</dbReference>
<dbReference type="EnsemblPlants" id="OsPr106_05g0008850.01">
    <property type="protein sequence ID" value="OsPr106_05g0008850.01"/>
    <property type="gene ID" value="OsPr106_05g0008850"/>
</dbReference>
<dbReference type="Gramene" id="BGIOSGA018445-TA">
    <property type="protein sequence ID" value="BGIOSGA018445-PA"/>
    <property type="gene ID" value="BGIOSGA018445"/>
</dbReference>
<dbReference type="Gramene" id="OsIR64_05g0008710.01">
    <property type="protein sequence ID" value="OsIR64_05g0008710.01"/>
    <property type="gene ID" value="OsIR64_05g0008710"/>
</dbReference>
<dbReference type="Gramene" id="OsLiXu_Ung0022690.01">
    <property type="protein sequence ID" value="OsLiXu_Ung0022690.01"/>
    <property type="gene ID" value="OsLiXu_Ung0022690"/>
</dbReference>
<dbReference type="Gramene" id="OsPr106_05g0008850.01">
    <property type="protein sequence ID" value="OsPr106_05g0008850.01"/>
    <property type="gene ID" value="OsPr106_05g0008850"/>
</dbReference>
<dbReference type="HOGENOM" id="CLU_066104_3_0_1"/>
<dbReference type="OMA" id="PKFCDQI"/>
<dbReference type="Proteomes" id="UP000007015">
    <property type="component" value="Chromosome 5"/>
</dbReference>
<dbReference type="GO" id="GO:0005886">
    <property type="term" value="C:plasma membrane"/>
    <property type="evidence" value="ECO:0007669"/>
    <property type="project" value="UniProtKB-SubCell"/>
</dbReference>
<dbReference type="GO" id="GO:0035264">
    <property type="term" value="P:multicellular organism growth"/>
    <property type="evidence" value="ECO:0007669"/>
    <property type="project" value="EnsemblPlants"/>
</dbReference>
<dbReference type="GO" id="GO:0009733">
    <property type="term" value="P:response to auxin"/>
    <property type="evidence" value="ECO:0000250"/>
    <property type="project" value="UniProtKB"/>
</dbReference>
<dbReference type="GO" id="GO:0009741">
    <property type="term" value="P:response to brassinosteroid"/>
    <property type="evidence" value="ECO:0000250"/>
    <property type="project" value="UniProtKB"/>
</dbReference>
<dbReference type="GO" id="GO:0009826">
    <property type="term" value="P:unidimensional cell growth"/>
    <property type="evidence" value="ECO:0000250"/>
    <property type="project" value="UniProtKB"/>
</dbReference>
<dbReference type="InterPro" id="IPR006459">
    <property type="entry name" value="CASP/CASPL"/>
</dbReference>
<dbReference type="InterPro" id="IPR006702">
    <property type="entry name" value="CASP_dom"/>
</dbReference>
<dbReference type="InterPro" id="IPR044173">
    <property type="entry name" value="CASPL"/>
</dbReference>
<dbReference type="NCBIfam" id="TIGR01569">
    <property type="entry name" value="A_tha_TIGR01569"/>
    <property type="match status" value="1"/>
</dbReference>
<dbReference type="PANTHER" id="PTHR36488">
    <property type="entry name" value="CASP-LIKE PROTEIN 1U1"/>
    <property type="match status" value="1"/>
</dbReference>
<dbReference type="PANTHER" id="PTHR36488:SF8">
    <property type="entry name" value="CASP-LIKE PROTEIN 1U1"/>
    <property type="match status" value="1"/>
</dbReference>
<dbReference type="Pfam" id="PF04535">
    <property type="entry name" value="CASP_dom"/>
    <property type="match status" value="1"/>
</dbReference>